<keyword id="KW-0028">Amino-acid biosynthesis</keyword>
<keyword id="KW-0055">Arginine biosynthesis</keyword>
<keyword id="KW-0963">Cytoplasm</keyword>
<keyword id="KW-0521">NADP</keyword>
<keyword id="KW-0560">Oxidoreductase</keyword>
<accession>C3LJQ9</accession>
<feature type="chain" id="PRO_1000123230" description="N-acetyl-gamma-glutamyl-phosphate reductase">
    <location>
        <begin position="1"/>
        <end position="345"/>
    </location>
</feature>
<feature type="active site" evidence="1">
    <location>
        <position position="149"/>
    </location>
</feature>
<proteinExistence type="inferred from homology"/>
<sequence length="345" mass="38603">MKVAIIGATGYGGIELIRLLEQHPYFSIASLHSFSQVGECITNVYPHFQNVLVHTLQEIDVEEIEKEAEIVFLATPAGVSAELTPKLLAVGLKVIDLSGDFRMKDPFIYEQWYKRAAAKEGVLREAVYGLSEWKRSEIQKANLIANPGCFATAALLAILPLVRSGIIEEDSIIIDAKSGVSGAGKTPTTMTHFPELYDNLRIYKVNEHQHIPEIEQMLAEWNRETKPITFSTHLIPISRGIMVTLYAKVKREMEIEQLQQLYEEAYEQSAFIRIRMQGEFPSPKEVRGSNYCDMGIAYDERTGRVTIVSVIDNMMKGAAGQAIQNANIVAGLEETTGLQHMPLYL</sequence>
<protein>
    <recommendedName>
        <fullName evidence="1">N-acetyl-gamma-glutamyl-phosphate reductase</fullName>
        <shortName evidence="1">AGPR</shortName>
        <ecNumber evidence="1">1.2.1.38</ecNumber>
    </recommendedName>
    <alternativeName>
        <fullName evidence="1">N-acetyl-glutamate semialdehyde dehydrogenase</fullName>
        <shortName evidence="1">NAGSA dehydrogenase</shortName>
    </alternativeName>
</protein>
<gene>
    <name evidence="1" type="primary">argC</name>
    <name type="ordered locus">BAMEG_4394</name>
</gene>
<comment type="function">
    <text evidence="1">Catalyzes the NADPH-dependent reduction of N-acetyl-5-glutamyl phosphate to yield N-acetyl-L-glutamate 5-semialdehyde.</text>
</comment>
<comment type="catalytic activity">
    <reaction evidence="1">
        <text>N-acetyl-L-glutamate 5-semialdehyde + phosphate + NADP(+) = N-acetyl-L-glutamyl 5-phosphate + NADPH + H(+)</text>
        <dbReference type="Rhea" id="RHEA:21588"/>
        <dbReference type="ChEBI" id="CHEBI:15378"/>
        <dbReference type="ChEBI" id="CHEBI:29123"/>
        <dbReference type="ChEBI" id="CHEBI:43474"/>
        <dbReference type="ChEBI" id="CHEBI:57783"/>
        <dbReference type="ChEBI" id="CHEBI:57936"/>
        <dbReference type="ChEBI" id="CHEBI:58349"/>
        <dbReference type="EC" id="1.2.1.38"/>
    </reaction>
</comment>
<comment type="pathway">
    <text evidence="1">Amino-acid biosynthesis; L-arginine biosynthesis; N(2)-acetyl-L-ornithine from L-glutamate: step 3/4.</text>
</comment>
<comment type="subcellular location">
    <subcellularLocation>
        <location evidence="1">Cytoplasm</location>
    </subcellularLocation>
</comment>
<comment type="similarity">
    <text evidence="1">Belongs to the NAGSA dehydrogenase family. Type 1 subfamily.</text>
</comment>
<name>ARGC_BACAC</name>
<organism>
    <name type="scientific">Bacillus anthracis (strain CDC 684 / NRRL 3495)</name>
    <dbReference type="NCBI Taxonomy" id="568206"/>
    <lineage>
        <taxon>Bacteria</taxon>
        <taxon>Bacillati</taxon>
        <taxon>Bacillota</taxon>
        <taxon>Bacilli</taxon>
        <taxon>Bacillales</taxon>
        <taxon>Bacillaceae</taxon>
        <taxon>Bacillus</taxon>
        <taxon>Bacillus cereus group</taxon>
    </lineage>
</organism>
<evidence type="ECO:0000255" key="1">
    <source>
        <dbReference type="HAMAP-Rule" id="MF_00150"/>
    </source>
</evidence>
<reference key="1">
    <citation type="submission" date="2008-10" db="EMBL/GenBank/DDBJ databases">
        <title>Genome sequence of Bacillus anthracis str. CDC 684.</title>
        <authorList>
            <person name="Dodson R.J."/>
            <person name="Munk A.C."/>
            <person name="Brettin T."/>
            <person name="Bruce D."/>
            <person name="Detter C."/>
            <person name="Tapia R."/>
            <person name="Han C."/>
            <person name="Sutton G."/>
            <person name="Sims D."/>
        </authorList>
    </citation>
    <scope>NUCLEOTIDE SEQUENCE [LARGE SCALE GENOMIC DNA]</scope>
    <source>
        <strain>CDC 684 / NRRL 3495</strain>
    </source>
</reference>
<dbReference type="EC" id="1.2.1.38" evidence="1"/>
<dbReference type="EMBL" id="CP001215">
    <property type="protein sequence ID" value="ACP16856.1"/>
    <property type="molecule type" value="Genomic_DNA"/>
</dbReference>
<dbReference type="RefSeq" id="WP_000861221.1">
    <property type="nucleotide sequence ID" value="NC_012581.1"/>
</dbReference>
<dbReference type="SMR" id="C3LJQ9"/>
<dbReference type="GeneID" id="45024020"/>
<dbReference type="KEGG" id="bah:BAMEG_4394"/>
<dbReference type="HOGENOM" id="CLU_006384_0_1_9"/>
<dbReference type="UniPathway" id="UPA00068">
    <property type="reaction ID" value="UER00108"/>
</dbReference>
<dbReference type="GO" id="GO:0005737">
    <property type="term" value="C:cytoplasm"/>
    <property type="evidence" value="ECO:0007669"/>
    <property type="project" value="UniProtKB-SubCell"/>
</dbReference>
<dbReference type="GO" id="GO:0003942">
    <property type="term" value="F:N-acetyl-gamma-glutamyl-phosphate reductase activity"/>
    <property type="evidence" value="ECO:0007669"/>
    <property type="project" value="UniProtKB-UniRule"/>
</dbReference>
<dbReference type="GO" id="GO:0051287">
    <property type="term" value="F:NAD binding"/>
    <property type="evidence" value="ECO:0007669"/>
    <property type="project" value="InterPro"/>
</dbReference>
<dbReference type="GO" id="GO:0070401">
    <property type="term" value="F:NADP+ binding"/>
    <property type="evidence" value="ECO:0007669"/>
    <property type="project" value="InterPro"/>
</dbReference>
<dbReference type="GO" id="GO:0006526">
    <property type="term" value="P:L-arginine biosynthetic process"/>
    <property type="evidence" value="ECO:0007669"/>
    <property type="project" value="UniProtKB-UniRule"/>
</dbReference>
<dbReference type="CDD" id="cd23934">
    <property type="entry name" value="AGPR_1_C"/>
    <property type="match status" value="1"/>
</dbReference>
<dbReference type="CDD" id="cd17895">
    <property type="entry name" value="AGPR_1_N"/>
    <property type="match status" value="1"/>
</dbReference>
<dbReference type="FunFam" id="3.30.360.10:FF:000014">
    <property type="entry name" value="N-acetyl-gamma-glutamyl-phosphate reductase"/>
    <property type="match status" value="1"/>
</dbReference>
<dbReference type="FunFam" id="3.40.50.720:FF:000117">
    <property type="entry name" value="N-acetyl-gamma-glutamyl-phosphate reductase"/>
    <property type="match status" value="1"/>
</dbReference>
<dbReference type="Gene3D" id="3.30.360.10">
    <property type="entry name" value="Dihydrodipicolinate Reductase, domain 2"/>
    <property type="match status" value="1"/>
</dbReference>
<dbReference type="Gene3D" id="3.40.50.720">
    <property type="entry name" value="NAD(P)-binding Rossmann-like Domain"/>
    <property type="match status" value="1"/>
</dbReference>
<dbReference type="HAMAP" id="MF_00150">
    <property type="entry name" value="ArgC_type1"/>
    <property type="match status" value="1"/>
</dbReference>
<dbReference type="InterPro" id="IPR023013">
    <property type="entry name" value="AGPR_AS"/>
</dbReference>
<dbReference type="InterPro" id="IPR000706">
    <property type="entry name" value="AGPR_type-1"/>
</dbReference>
<dbReference type="InterPro" id="IPR036291">
    <property type="entry name" value="NAD(P)-bd_dom_sf"/>
</dbReference>
<dbReference type="InterPro" id="IPR050085">
    <property type="entry name" value="NAGSA_dehydrogenase"/>
</dbReference>
<dbReference type="InterPro" id="IPR000534">
    <property type="entry name" value="Semialdehyde_DH_NAD-bd"/>
</dbReference>
<dbReference type="NCBIfam" id="TIGR01850">
    <property type="entry name" value="argC"/>
    <property type="match status" value="1"/>
</dbReference>
<dbReference type="PANTHER" id="PTHR32338:SF10">
    <property type="entry name" value="N-ACETYL-GAMMA-GLUTAMYL-PHOSPHATE REDUCTASE, CHLOROPLASTIC-RELATED"/>
    <property type="match status" value="1"/>
</dbReference>
<dbReference type="PANTHER" id="PTHR32338">
    <property type="entry name" value="N-ACETYL-GAMMA-GLUTAMYL-PHOSPHATE REDUCTASE, CHLOROPLASTIC-RELATED-RELATED"/>
    <property type="match status" value="1"/>
</dbReference>
<dbReference type="Pfam" id="PF01118">
    <property type="entry name" value="Semialdhyde_dh"/>
    <property type="match status" value="1"/>
</dbReference>
<dbReference type="Pfam" id="PF22698">
    <property type="entry name" value="Semialdhyde_dhC_1"/>
    <property type="match status" value="1"/>
</dbReference>
<dbReference type="SMART" id="SM00859">
    <property type="entry name" value="Semialdhyde_dh"/>
    <property type="match status" value="1"/>
</dbReference>
<dbReference type="SUPFAM" id="SSF55347">
    <property type="entry name" value="Glyceraldehyde-3-phosphate dehydrogenase-like, C-terminal domain"/>
    <property type="match status" value="1"/>
</dbReference>
<dbReference type="SUPFAM" id="SSF51735">
    <property type="entry name" value="NAD(P)-binding Rossmann-fold domains"/>
    <property type="match status" value="1"/>
</dbReference>
<dbReference type="PROSITE" id="PS01224">
    <property type="entry name" value="ARGC"/>
    <property type="match status" value="1"/>
</dbReference>